<dbReference type="EC" id="3.5.1.88" evidence="1"/>
<dbReference type="EMBL" id="CP000463">
    <property type="protein sequence ID" value="ABJ04614.1"/>
    <property type="molecule type" value="Genomic_DNA"/>
</dbReference>
<dbReference type="SMR" id="Q07TX0"/>
<dbReference type="STRING" id="316055.RPE_0656"/>
<dbReference type="KEGG" id="rpe:RPE_0656"/>
<dbReference type="eggNOG" id="COG0242">
    <property type="taxonomic scope" value="Bacteria"/>
</dbReference>
<dbReference type="HOGENOM" id="CLU_061901_2_0_5"/>
<dbReference type="OrthoDB" id="9804313at2"/>
<dbReference type="GO" id="GO:0046872">
    <property type="term" value="F:metal ion binding"/>
    <property type="evidence" value="ECO:0007669"/>
    <property type="project" value="UniProtKB-KW"/>
</dbReference>
<dbReference type="GO" id="GO:0042586">
    <property type="term" value="F:peptide deformylase activity"/>
    <property type="evidence" value="ECO:0007669"/>
    <property type="project" value="UniProtKB-UniRule"/>
</dbReference>
<dbReference type="GO" id="GO:0043686">
    <property type="term" value="P:co-translational protein modification"/>
    <property type="evidence" value="ECO:0007669"/>
    <property type="project" value="TreeGrafter"/>
</dbReference>
<dbReference type="GO" id="GO:0006412">
    <property type="term" value="P:translation"/>
    <property type="evidence" value="ECO:0007669"/>
    <property type="project" value="UniProtKB-UniRule"/>
</dbReference>
<dbReference type="CDD" id="cd00487">
    <property type="entry name" value="Pep_deformylase"/>
    <property type="match status" value="1"/>
</dbReference>
<dbReference type="Gene3D" id="3.90.45.10">
    <property type="entry name" value="Peptide deformylase"/>
    <property type="match status" value="1"/>
</dbReference>
<dbReference type="HAMAP" id="MF_00163">
    <property type="entry name" value="Pep_deformylase"/>
    <property type="match status" value="1"/>
</dbReference>
<dbReference type="InterPro" id="IPR023635">
    <property type="entry name" value="Peptide_deformylase"/>
</dbReference>
<dbReference type="InterPro" id="IPR036821">
    <property type="entry name" value="Peptide_deformylase_sf"/>
</dbReference>
<dbReference type="NCBIfam" id="TIGR00079">
    <property type="entry name" value="pept_deformyl"/>
    <property type="match status" value="1"/>
</dbReference>
<dbReference type="NCBIfam" id="NF001159">
    <property type="entry name" value="PRK00150.1-3"/>
    <property type="match status" value="1"/>
</dbReference>
<dbReference type="PANTHER" id="PTHR10458">
    <property type="entry name" value="PEPTIDE DEFORMYLASE"/>
    <property type="match status" value="1"/>
</dbReference>
<dbReference type="PANTHER" id="PTHR10458:SF22">
    <property type="entry name" value="PEPTIDE DEFORMYLASE"/>
    <property type="match status" value="1"/>
</dbReference>
<dbReference type="Pfam" id="PF01327">
    <property type="entry name" value="Pep_deformylase"/>
    <property type="match status" value="1"/>
</dbReference>
<dbReference type="PIRSF" id="PIRSF004749">
    <property type="entry name" value="Pep_def"/>
    <property type="match status" value="1"/>
</dbReference>
<dbReference type="PRINTS" id="PR01576">
    <property type="entry name" value="PDEFORMYLASE"/>
</dbReference>
<dbReference type="SUPFAM" id="SSF56420">
    <property type="entry name" value="Peptide deformylase"/>
    <property type="match status" value="1"/>
</dbReference>
<organism>
    <name type="scientific">Rhodopseudomonas palustris (strain BisA53)</name>
    <dbReference type="NCBI Taxonomy" id="316055"/>
    <lineage>
        <taxon>Bacteria</taxon>
        <taxon>Pseudomonadati</taxon>
        <taxon>Pseudomonadota</taxon>
        <taxon>Alphaproteobacteria</taxon>
        <taxon>Hyphomicrobiales</taxon>
        <taxon>Nitrobacteraceae</taxon>
        <taxon>Rhodopseudomonas</taxon>
    </lineage>
</organism>
<name>DEF_RHOP5</name>
<reference key="1">
    <citation type="submission" date="2006-09" db="EMBL/GenBank/DDBJ databases">
        <title>Complete sequence of Rhodopseudomonas palustris BisA53.</title>
        <authorList>
            <consortium name="US DOE Joint Genome Institute"/>
            <person name="Copeland A."/>
            <person name="Lucas S."/>
            <person name="Lapidus A."/>
            <person name="Barry K."/>
            <person name="Detter J.C."/>
            <person name="Glavina del Rio T."/>
            <person name="Hammon N."/>
            <person name="Israni S."/>
            <person name="Dalin E."/>
            <person name="Tice H."/>
            <person name="Pitluck S."/>
            <person name="Chain P."/>
            <person name="Malfatti S."/>
            <person name="Shin M."/>
            <person name="Vergez L."/>
            <person name="Schmutz J."/>
            <person name="Larimer F."/>
            <person name="Land M."/>
            <person name="Hauser L."/>
            <person name="Pelletier D.A."/>
            <person name="Kyrpides N."/>
            <person name="Kim E."/>
            <person name="Harwood C.S."/>
            <person name="Oda Y."/>
            <person name="Richardson P."/>
        </authorList>
    </citation>
    <scope>NUCLEOTIDE SEQUENCE [LARGE SCALE GENOMIC DNA]</scope>
    <source>
        <strain>BisA53</strain>
    </source>
</reference>
<protein>
    <recommendedName>
        <fullName evidence="1">Peptide deformylase</fullName>
        <shortName evidence="1">PDF</shortName>
        <ecNumber evidence="1">3.5.1.88</ecNumber>
    </recommendedName>
    <alternativeName>
        <fullName evidence="1">Polypeptide deformylase</fullName>
    </alternativeName>
</protein>
<evidence type="ECO:0000255" key="1">
    <source>
        <dbReference type="HAMAP-Rule" id="MF_00163"/>
    </source>
</evidence>
<gene>
    <name evidence="1" type="primary">def</name>
    <name type="ordered locus">RPE_0656</name>
</gene>
<keyword id="KW-0378">Hydrolase</keyword>
<keyword id="KW-0408">Iron</keyword>
<keyword id="KW-0479">Metal-binding</keyword>
<keyword id="KW-0648">Protein biosynthesis</keyword>
<comment type="function">
    <text evidence="1">Removes the formyl group from the N-terminal Met of newly synthesized proteins. Requires at least a dipeptide for an efficient rate of reaction. N-terminal L-methionine is a prerequisite for activity but the enzyme has broad specificity at other positions.</text>
</comment>
<comment type="catalytic activity">
    <reaction evidence="1">
        <text>N-terminal N-formyl-L-methionyl-[peptide] + H2O = N-terminal L-methionyl-[peptide] + formate</text>
        <dbReference type="Rhea" id="RHEA:24420"/>
        <dbReference type="Rhea" id="RHEA-COMP:10639"/>
        <dbReference type="Rhea" id="RHEA-COMP:10640"/>
        <dbReference type="ChEBI" id="CHEBI:15377"/>
        <dbReference type="ChEBI" id="CHEBI:15740"/>
        <dbReference type="ChEBI" id="CHEBI:49298"/>
        <dbReference type="ChEBI" id="CHEBI:64731"/>
        <dbReference type="EC" id="3.5.1.88"/>
    </reaction>
</comment>
<comment type="cofactor">
    <cofactor evidence="1">
        <name>Fe(2+)</name>
        <dbReference type="ChEBI" id="CHEBI:29033"/>
    </cofactor>
    <text evidence="1">Binds 1 Fe(2+) ion.</text>
</comment>
<comment type="similarity">
    <text evidence="1">Belongs to the polypeptide deformylase family.</text>
</comment>
<accession>Q07TX0</accession>
<feature type="chain" id="PRO_0000301087" description="Peptide deformylase">
    <location>
        <begin position="1"/>
        <end position="180"/>
    </location>
</feature>
<feature type="active site" evidence="1">
    <location>
        <position position="139"/>
    </location>
</feature>
<feature type="binding site" evidence="1">
    <location>
        <position position="96"/>
    </location>
    <ligand>
        <name>Fe cation</name>
        <dbReference type="ChEBI" id="CHEBI:24875"/>
    </ligand>
</feature>
<feature type="binding site" evidence="1">
    <location>
        <position position="138"/>
    </location>
    <ligand>
        <name>Fe cation</name>
        <dbReference type="ChEBI" id="CHEBI:24875"/>
    </ligand>
</feature>
<feature type="binding site" evidence="1">
    <location>
        <position position="142"/>
    </location>
    <ligand>
        <name>Fe cation</name>
        <dbReference type="ChEBI" id="CHEBI:24875"/>
    </ligand>
</feature>
<sequence>MALREIIIVPDKQLRLTSKPVETVSPEVRKLADDMFETMYDAPGIGLAAIQIAEPVRLITMDLVRKEGNGKTEPRAFINPEIIGASTETRVYEEGCLSIPEYYAEVERPAQVRIRYTDLDGHVHEEDADGLFATCIQHEIDHLNGTLFIDHISRLKRALVMRKFEKAAKRGYKFVPAKTA</sequence>
<proteinExistence type="inferred from homology"/>